<comment type="function">
    <text evidence="1">Part of the ABC transporter complex PotABCD involved in spermidine/putrescine import. Responsible for energy coupling to the transport system.</text>
</comment>
<comment type="catalytic activity">
    <reaction evidence="1">
        <text>ATP + H2O + polyamine-[polyamine-binding protein]Side 1 = ADP + phosphate + polyamineSide 2 + [polyamine-binding protein]Side 1.</text>
        <dbReference type="EC" id="7.6.2.11"/>
    </reaction>
</comment>
<comment type="subunit">
    <text evidence="1">The complex is composed of two ATP-binding proteins (PotA), two transmembrane proteins (PotB and PotC) and a solute-binding protein (PotD).</text>
</comment>
<comment type="subcellular location">
    <subcellularLocation>
        <location evidence="1">Cell membrane</location>
        <topology evidence="1">Peripheral membrane protein</topology>
    </subcellularLocation>
</comment>
<comment type="similarity">
    <text evidence="1">Belongs to the ABC transporter superfamily. Spermidine/putrescine importer (TC 3.A.1.11.1) family.</text>
</comment>
<name>POTA_STRP3</name>
<protein>
    <recommendedName>
        <fullName evidence="1">Spermidine/putrescine import ATP-binding protein PotA</fullName>
        <ecNumber evidence="1">7.6.2.11</ecNumber>
    </recommendedName>
</protein>
<dbReference type="EC" id="7.6.2.11" evidence="1"/>
<dbReference type="EMBL" id="AE014074">
    <property type="protein sequence ID" value="AAM79371.1"/>
    <property type="molecule type" value="Genomic_DNA"/>
</dbReference>
<dbReference type="RefSeq" id="WP_002984745.1">
    <property type="nucleotide sequence ID" value="NC_004070.1"/>
</dbReference>
<dbReference type="SMR" id="P0CZ34"/>
<dbReference type="KEGG" id="spg:SpyM3_0764"/>
<dbReference type="HOGENOM" id="CLU_000604_1_1_9"/>
<dbReference type="Proteomes" id="UP000000564">
    <property type="component" value="Chromosome"/>
</dbReference>
<dbReference type="GO" id="GO:0043190">
    <property type="term" value="C:ATP-binding cassette (ABC) transporter complex"/>
    <property type="evidence" value="ECO:0007669"/>
    <property type="project" value="InterPro"/>
</dbReference>
<dbReference type="GO" id="GO:0015417">
    <property type="term" value="F:ABC-type polyamine transporter activity"/>
    <property type="evidence" value="ECO:0007669"/>
    <property type="project" value="UniProtKB-EC"/>
</dbReference>
<dbReference type="GO" id="GO:0005524">
    <property type="term" value="F:ATP binding"/>
    <property type="evidence" value="ECO:0007669"/>
    <property type="project" value="UniProtKB-KW"/>
</dbReference>
<dbReference type="GO" id="GO:0016887">
    <property type="term" value="F:ATP hydrolysis activity"/>
    <property type="evidence" value="ECO:0007669"/>
    <property type="project" value="InterPro"/>
</dbReference>
<dbReference type="FunFam" id="3.40.50.300:FF:000042">
    <property type="entry name" value="Maltose/maltodextrin ABC transporter, ATP-binding protein"/>
    <property type="match status" value="1"/>
</dbReference>
<dbReference type="Gene3D" id="2.40.50.100">
    <property type="match status" value="1"/>
</dbReference>
<dbReference type="Gene3D" id="3.40.50.300">
    <property type="entry name" value="P-loop containing nucleotide triphosphate hydrolases"/>
    <property type="match status" value="1"/>
</dbReference>
<dbReference type="InterPro" id="IPR003593">
    <property type="entry name" value="AAA+_ATPase"/>
</dbReference>
<dbReference type="InterPro" id="IPR050093">
    <property type="entry name" value="ABC_SmlMolc_Importer"/>
</dbReference>
<dbReference type="InterPro" id="IPR003439">
    <property type="entry name" value="ABC_transporter-like_ATP-bd"/>
</dbReference>
<dbReference type="InterPro" id="IPR017871">
    <property type="entry name" value="ABC_transporter-like_CS"/>
</dbReference>
<dbReference type="InterPro" id="IPR008995">
    <property type="entry name" value="Mo/tungstate-bd_C_term_dom"/>
</dbReference>
<dbReference type="InterPro" id="IPR027417">
    <property type="entry name" value="P-loop_NTPase"/>
</dbReference>
<dbReference type="InterPro" id="IPR005893">
    <property type="entry name" value="PotA-like"/>
</dbReference>
<dbReference type="InterPro" id="IPR013611">
    <property type="entry name" value="Transp-assoc_OB_typ2"/>
</dbReference>
<dbReference type="NCBIfam" id="TIGR01187">
    <property type="entry name" value="potA"/>
    <property type="match status" value="1"/>
</dbReference>
<dbReference type="PANTHER" id="PTHR42781">
    <property type="entry name" value="SPERMIDINE/PUTRESCINE IMPORT ATP-BINDING PROTEIN POTA"/>
    <property type="match status" value="1"/>
</dbReference>
<dbReference type="PANTHER" id="PTHR42781:SF4">
    <property type="entry name" value="SPERMIDINE_PUTRESCINE IMPORT ATP-BINDING PROTEIN POTA"/>
    <property type="match status" value="1"/>
</dbReference>
<dbReference type="Pfam" id="PF00005">
    <property type="entry name" value="ABC_tran"/>
    <property type="match status" value="1"/>
</dbReference>
<dbReference type="Pfam" id="PF08402">
    <property type="entry name" value="TOBE_2"/>
    <property type="match status" value="1"/>
</dbReference>
<dbReference type="SMART" id="SM00382">
    <property type="entry name" value="AAA"/>
    <property type="match status" value="1"/>
</dbReference>
<dbReference type="SUPFAM" id="SSF50331">
    <property type="entry name" value="MOP-like"/>
    <property type="match status" value="1"/>
</dbReference>
<dbReference type="SUPFAM" id="SSF52540">
    <property type="entry name" value="P-loop containing nucleoside triphosphate hydrolases"/>
    <property type="match status" value="1"/>
</dbReference>
<dbReference type="PROSITE" id="PS00211">
    <property type="entry name" value="ABC_TRANSPORTER_1"/>
    <property type="match status" value="1"/>
</dbReference>
<dbReference type="PROSITE" id="PS50893">
    <property type="entry name" value="ABC_TRANSPORTER_2"/>
    <property type="match status" value="1"/>
</dbReference>
<dbReference type="PROSITE" id="PS51305">
    <property type="entry name" value="POTA"/>
    <property type="match status" value="1"/>
</dbReference>
<evidence type="ECO:0000255" key="1">
    <source>
        <dbReference type="HAMAP-Rule" id="MF_01726"/>
    </source>
</evidence>
<gene>
    <name evidence="1" type="primary">potA</name>
    <name type="ordered locus">SpyM3_0764</name>
</gene>
<feature type="chain" id="PRO_0000286311" description="Spermidine/putrescine import ATP-binding protein PotA">
    <location>
        <begin position="1"/>
        <end position="384"/>
    </location>
</feature>
<feature type="domain" description="ABC transporter" evidence="1">
    <location>
        <begin position="6"/>
        <end position="238"/>
    </location>
</feature>
<feature type="binding site" evidence="1">
    <location>
        <begin position="40"/>
        <end position="47"/>
    </location>
    <ligand>
        <name>ATP</name>
        <dbReference type="ChEBI" id="CHEBI:30616"/>
    </ligand>
</feature>
<sequence>MTKPIITFNNVSKTFEDSGTQVLKNINFDLEEGKFYTLLGASGSGKSTILNIMAGLLDASSGDIYLDGERINDLPINKRDIHTVFQNYALFPHMTVFENVAFALKLKKVDKKEIAKRVKETLKMVQLEGYENRSIQKLSGGQRQRVAIARAIINQPRVVLLDEPLSALDLKLRTEMQYELRELQQRLGITFVFVTHDQEEALAMSDWVFVMNEGEIVQSGTPVDIYDEPINHFVANFIGESNIINGTMIEDYLVSFNGKEFESVDGGMRPNEPVEVVIRPEDLQITLPEEGKLQVKVDTQLFRGVHYEIIAYDELGNEWMIHSTRKAIEGEVIGLDFTPEDLHIMRLNETEEEFDARIEEYVEMDEPEDGLINAIEEERNEENL</sequence>
<proteinExistence type="inferred from homology"/>
<reference key="1">
    <citation type="journal article" date="2002" name="Proc. Natl. Acad. Sci. U.S.A.">
        <title>Genome sequence of a serotype M3 strain of group A Streptococcus: phage-encoded toxins, the high-virulence phenotype, and clone emergence.</title>
        <authorList>
            <person name="Beres S.B."/>
            <person name="Sylva G.L."/>
            <person name="Barbian K.D."/>
            <person name="Lei B."/>
            <person name="Hoff J.S."/>
            <person name="Mammarella N.D."/>
            <person name="Liu M.-Y."/>
            <person name="Smoot J.C."/>
            <person name="Porcella S.F."/>
            <person name="Parkins L.D."/>
            <person name="Campbell D.S."/>
            <person name="Smith T.M."/>
            <person name="McCormick J.K."/>
            <person name="Leung D.Y.M."/>
            <person name="Schlievert P.M."/>
            <person name="Musser J.M."/>
        </authorList>
    </citation>
    <scope>NUCLEOTIDE SEQUENCE [LARGE SCALE GENOMIC DNA]</scope>
    <source>
        <strain>ATCC BAA-595 / MGAS315</strain>
    </source>
</reference>
<keyword id="KW-0067">ATP-binding</keyword>
<keyword id="KW-1003">Cell membrane</keyword>
<keyword id="KW-0472">Membrane</keyword>
<keyword id="KW-0547">Nucleotide-binding</keyword>
<keyword id="KW-1278">Translocase</keyword>
<keyword id="KW-0813">Transport</keyword>
<accession>P0CZ34</accession>
<accession>Q79X98</accession>
<accession>Q8K7K4</accession>
<organism>
    <name type="scientific">Streptococcus pyogenes serotype M3 (strain ATCC BAA-595 / MGAS315)</name>
    <dbReference type="NCBI Taxonomy" id="198466"/>
    <lineage>
        <taxon>Bacteria</taxon>
        <taxon>Bacillati</taxon>
        <taxon>Bacillota</taxon>
        <taxon>Bacilli</taxon>
        <taxon>Lactobacillales</taxon>
        <taxon>Streptococcaceae</taxon>
        <taxon>Streptococcus</taxon>
    </lineage>
</organism>